<protein>
    <recommendedName>
        <fullName evidence="1">ATP synthase F(0) complex subunit 8</fullName>
    </recommendedName>
    <alternativeName>
        <fullName>A6L</fullName>
    </alternativeName>
    <alternativeName>
        <fullName>F-ATPase subunit 8</fullName>
    </alternativeName>
</protein>
<proteinExistence type="inferred from homology"/>
<evidence type="ECO:0000250" key="1">
    <source>
        <dbReference type="UniProtKB" id="P03928"/>
    </source>
</evidence>
<evidence type="ECO:0000250" key="2">
    <source>
        <dbReference type="UniProtKB" id="P19483"/>
    </source>
</evidence>
<evidence type="ECO:0000255" key="3"/>
<evidence type="ECO:0000305" key="4"/>
<name>ATP8_LYCSM</name>
<comment type="function">
    <text evidence="1 2">Subunit 8, of the mitochondrial membrane ATP synthase complex (F(1)F(0) ATP synthase or Complex V) that produces ATP from ADP in the presence of a proton gradient across the membrane which is generated by electron transport complexes of the respiratory chain. ATP synthase complex consist of a soluble F(1) head domain - the catalytic core - and a membrane F(1) domain - the membrane proton channel. These two domains are linked by a central stalk rotating inside the F(1) region and a stationary peripheral stalk. During catalysis, ATP synthesis in the catalytic domain of F(1) is coupled via a rotary mechanism of the central stalk subunits to proton translocation (By similarity). In vivo, can only synthesize ATP although its ATP hydrolase activity can be activated artificially in vitro (By similarity). Part of the complex F(0) domain (By similarity).</text>
</comment>
<comment type="subunit">
    <text evidence="1">Component of the ATP synthase complex composed at least of ATP5F1A/subunit alpha, ATP5F1B/subunit beta, ATP5MC1/subunit c (homooctomer), MT-ATP6/subunit a, MT-ATP8/subunit 8, ATP5ME/subunit e, ATP5MF/subunit f, ATP5MG/subunit g, ATP5MK/subunit k, ATP5MJ/subunit j, ATP5F1C/subunit gamma, ATP5F1D/subunit delta, ATP5F1E/subunit epsilon, ATP5PF/subunit F6, ATP5PB/subunit b, ATP5PD/subunit d, ATP5PO/subunit OSCP. ATP synthase complex consists of a soluble F(1) head domain (subunits alpha(3) and beta(3)) - the catalytic core - and a membrane F(0) domain - the membrane proton channel (subunits c, a, 8, e, f, g, k and j). These two domains are linked by a central stalk (subunits gamma, delta, and epsilon) rotating inside the F1 region and a stationary peripheral stalk (subunits F6, b, d, and OSCP).</text>
</comment>
<comment type="subcellular location">
    <subcellularLocation>
        <location>Mitochondrion membrane</location>
        <topology>Single-pass membrane protein</topology>
    </subcellularLocation>
</comment>
<comment type="similarity">
    <text evidence="4">Belongs to the ATPase protein 8 family.</text>
</comment>
<keyword id="KW-0066">ATP synthesis</keyword>
<keyword id="KW-0138">CF(0)</keyword>
<keyword id="KW-0375">Hydrogen ion transport</keyword>
<keyword id="KW-0406">Ion transport</keyword>
<keyword id="KW-0472">Membrane</keyword>
<keyword id="KW-0496">Mitochondrion</keyword>
<keyword id="KW-0812">Transmembrane</keyword>
<keyword id="KW-1133">Transmembrane helix</keyword>
<keyword id="KW-0813">Transport</keyword>
<accession>O79550</accession>
<dbReference type="EMBL" id="AB008539">
    <property type="protein sequence ID" value="BAA33026.1"/>
    <property type="molecule type" value="Genomic_DNA"/>
</dbReference>
<dbReference type="PIR" id="T11092">
    <property type="entry name" value="T11092"/>
</dbReference>
<dbReference type="RefSeq" id="NP_008423.1">
    <property type="nucleotide sequence ID" value="NC_001945.1"/>
</dbReference>
<dbReference type="SMR" id="O79550"/>
<dbReference type="GeneID" id="808273"/>
<dbReference type="CTD" id="4509"/>
<dbReference type="GO" id="GO:0031966">
    <property type="term" value="C:mitochondrial membrane"/>
    <property type="evidence" value="ECO:0007669"/>
    <property type="project" value="UniProtKB-SubCell"/>
</dbReference>
<dbReference type="GO" id="GO:0045259">
    <property type="term" value="C:proton-transporting ATP synthase complex"/>
    <property type="evidence" value="ECO:0007669"/>
    <property type="project" value="UniProtKB-KW"/>
</dbReference>
<dbReference type="GO" id="GO:0006754">
    <property type="term" value="P:ATP biosynthetic process"/>
    <property type="evidence" value="ECO:0007669"/>
    <property type="project" value="UniProtKB-KW"/>
</dbReference>
<dbReference type="GO" id="GO:1902600">
    <property type="term" value="P:proton transmembrane transport"/>
    <property type="evidence" value="ECO:0007669"/>
    <property type="project" value="UniProtKB-KW"/>
</dbReference>
<gene>
    <name evidence="1" type="primary">MT-ATP8</name>
    <name type="synonym">ATP8</name>
    <name type="synonym">ATPASE8</name>
    <name type="synonym">MTATP8</name>
</gene>
<geneLocation type="mitochondrion"/>
<reference key="1">
    <citation type="journal article" date="1998" name="Genetics">
        <title>The complete nucleotide sequence of a snake (Dinodon semicarinatus) mitochondrial genome with two identical control regions.</title>
        <authorList>
            <person name="Kumazawa Y."/>
            <person name="Ota H."/>
            <person name="Nishida M."/>
            <person name="Ozawa T."/>
        </authorList>
    </citation>
    <scope>NUCLEOTIDE SEQUENCE [GENOMIC DNA]</scope>
    <source>
        <tissue>Liver</tissue>
    </source>
</reference>
<sequence>MPQLDTIYILMTHLWAWLMLYLTTQKIKTFIMTSHPMIYHKPNKQTPTPTWL</sequence>
<feature type="chain" id="PRO_0000195521" description="ATP synthase F(0) complex subunit 8">
    <location>
        <begin position="1"/>
        <end position="52"/>
    </location>
</feature>
<feature type="transmembrane region" description="Helical" evidence="3">
    <location>
        <begin position="10"/>
        <end position="30"/>
    </location>
</feature>
<organism>
    <name type="scientific">Lycodon semicarinatus</name>
    <name type="common">Ryukyu odd-tooth snake</name>
    <name type="synonym">Eumesodon semicarinatus</name>
    <dbReference type="NCBI Taxonomy" id="56549"/>
    <lineage>
        <taxon>Eukaryota</taxon>
        <taxon>Metazoa</taxon>
        <taxon>Chordata</taxon>
        <taxon>Craniata</taxon>
        <taxon>Vertebrata</taxon>
        <taxon>Euteleostomi</taxon>
        <taxon>Lepidosauria</taxon>
        <taxon>Squamata</taxon>
        <taxon>Bifurcata</taxon>
        <taxon>Unidentata</taxon>
        <taxon>Episquamata</taxon>
        <taxon>Toxicofera</taxon>
        <taxon>Serpentes</taxon>
        <taxon>Colubroidea</taxon>
        <taxon>Colubridae</taxon>
        <taxon>Colubrinae</taxon>
        <taxon>Lycodon</taxon>
    </lineage>
</organism>